<keyword id="KW-0255">Endonuclease</keyword>
<keyword id="KW-0378">Hydrolase</keyword>
<keyword id="KW-0540">Nuclease</keyword>
<keyword id="KW-0694">RNA-binding</keyword>
<keyword id="KW-0819">tRNA processing</keyword>
<evidence type="ECO:0000255" key="1">
    <source>
        <dbReference type="HAMAP-Rule" id="MF_00227"/>
    </source>
</evidence>
<comment type="function">
    <text evidence="1">RNaseP catalyzes the removal of the 5'-leader sequence from pre-tRNA to produce the mature 5'-terminus. It can also cleave other RNA substrates such as 4.5S RNA. The protein component plays an auxiliary but essential role in vivo by binding to the 5'-leader sequence and broadening the substrate specificity of the ribozyme.</text>
</comment>
<comment type="catalytic activity">
    <reaction evidence="1">
        <text>Endonucleolytic cleavage of RNA, removing 5'-extranucleotides from tRNA precursor.</text>
        <dbReference type="EC" id="3.1.26.5"/>
    </reaction>
</comment>
<comment type="subunit">
    <text evidence="1">Consists of a catalytic RNA component (M1 or rnpB) and a protein subunit.</text>
</comment>
<comment type="similarity">
    <text evidence="1">Belongs to the RnpA family.</text>
</comment>
<dbReference type="EC" id="3.1.26.5" evidence="1"/>
<dbReference type="EMBL" id="AP009380">
    <property type="protein sequence ID" value="BAG32828.1"/>
    <property type="molecule type" value="Genomic_DNA"/>
</dbReference>
<dbReference type="RefSeq" id="WP_012457414.1">
    <property type="nucleotide sequence ID" value="NZ_CP025930.1"/>
</dbReference>
<dbReference type="SMR" id="B2RHI3"/>
<dbReference type="GeneID" id="29255554"/>
<dbReference type="KEGG" id="pgn:PGN_0309"/>
<dbReference type="eggNOG" id="COG0594">
    <property type="taxonomic scope" value="Bacteria"/>
</dbReference>
<dbReference type="HOGENOM" id="CLU_117179_1_0_10"/>
<dbReference type="OrthoDB" id="1524972at2"/>
<dbReference type="BioCyc" id="PGIN431947:G1G2V-335-MONOMER"/>
<dbReference type="Proteomes" id="UP000008842">
    <property type="component" value="Chromosome"/>
</dbReference>
<dbReference type="GO" id="GO:0030677">
    <property type="term" value="C:ribonuclease P complex"/>
    <property type="evidence" value="ECO:0007669"/>
    <property type="project" value="TreeGrafter"/>
</dbReference>
<dbReference type="GO" id="GO:0042781">
    <property type="term" value="F:3'-tRNA processing endoribonuclease activity"/>
    <property type="evidence" value="ECO:0007669"/>
    <property type="project" value="TreeGrafter"/>
</dbReference>
<dbReference type="GO" id="GO:0004526">
    <property type="term" value="F:ribonuclease P activity"/>
    <property type="evidence" value="ECO:0007669"/>
    <property type="project" value="UniProtKB-UniRule"/>
</dbReference>
<dbReference type="GO" id="GO:0000049">
    <property type="term" value="F:tRNA binding"/>
    <property type="evidence" value="ECO:0007669"/>
    <property type="project" value="UniProtKB-UniRule"/>
</dbReference>
<dbReference type="GO" id="GO:0001682">
    <property type="term" value="P:tRNA 5'-leader removal"/>
    <property type="evidence" value="ECO:0007669"/>
    <property type="project" value="UniProtKB-UniRule"/>
</dbReference>
<dbReference type="Gene3D" id="3.30.230.10">
    <property type="match status" value="1"/>
</dbReference>
<dbReference type="HAMAP" id="MF_00227">
    <property type="entry name" value="RNase_P"/>
    <property type="match status" value="1"/>
</dbReference>
<dbReference type="InterPro" id="IPR020568">
    <property type="entry name" value="Ribosomal_Su5_D2-typ_SF"/>
</dbReference>
<dbReference type="InterPro" id="IPR014721">
    <property type="entry name" value="Ribsml_uS5_D2-typ_fold_subgr"/>
</dbReference>
<dbReference type="InterPro" id="IPR000100">
    <property type="entry name" value="RNase_P"/>
</dbReference>
<dbReference type="InterPro" id="IPR020539">
    <property type="entry name" value="RNase_P_CS"/>
</dbReference>
<dbReference type="NCBIfam" id="TIGR00188">
    <property type="entry name" value="rnpA"/>
    <property type="match status" value="1"/>
</dbReference>
<dbReference type="PANTHER" id="PTHR33992">
    <property type="entry name" value="RIBONUCLEASE P PROTEIN COMPONENT"/>
    <property type="match status" value="1"/>
</dbReference>
<dbReference type="PANTHER" id="PTHR33992:SF1">
    <property type="entry name" value="RIBONUCLEASE P PROTEIN COMPONENT"/>
    <property type="match status" value="1"/>
</dbReference>
<dbReference type="Pfam" id="PF00825">
    <property type="entry name" value="Ribonuclease_P"/>
    <property type="match status" value="1"/>
</dbReference>
<dbReference type="SUPFAM" id="SSF54211">
    <property type="entry name" value="Ribosomal protein S5 domain 2-like"/>
    <property type="match status" value="1"/>
</dbReference>
<dbReference type="PROSITE" id="PS00648">
    <property type="entry name" value="RIBONUCLEASE_P"/>
    <property type="match status" value="1"/>
</dbReference>
<reference key="1">
    <citation type="journal article" date="2008" name="DNA Res.">
        <title>Determination of the genome sequence of Porphyromonas gingivalis strain ATCC 33277 and genomic comparison with strain W83 revealed extensive genome rearrangements in P. gingivalis.</title>
        <authorList>
            <person name="Naito M."/>
            <person name="Hirakawa H."/>
            <person name="Yamashita A."/>
            <person name="Ohara N."/>
            <person name="Shoji M."/>
            <person name="Yukitake H."/>
            <person name="Nakayama K."/>
            <person name="Toh H."/>
            <person name="Yoshimura F."/>
            <person name="Kuhara S."/>
            <person name="Hattori M."/>
            <person name="Hayashi T."/>
            <person name="Nakayama K."/>
        </authorList>
    </citation>
    <scope>NUCLEOTIDE SEQUENCE [LARGE SCALE GENOMIC DNA]</scope>
    <source>
        <strain>ATCC 33277 / DSM 20709 / CIP 103683 / JCM 12257 / NCTC 11834 / 2561</strain>
    </source>
</reference>
<protein>
    <recommendedName>
        <fullName evidence="1">Ribonuclease P protein component</fullName>
        <shortName evidence="1">RNase P protein</shortName>
        <shortName evidence="1">RNaseP protein</shortName>
        <ecNumber evidence="1">3.1.26.5</ecNumber>
    </recommendedName>
    <alternativeName>
        <fullName evidence="1">Protein C5</fullName>
    </alternativeName>
</protein>
<gene>
    <name evidence="1" type="primary">rnpA</name>
    <name type="ordered locus">PGN_0309</name>
</gene>
<organism>
    <name type="scientific">Porphyromonas gingivalis (strain ATCC 33277 / DSM 20709 / CIP 103683 / JCM 12257 / NCTC 11834 / 2561)</name>
    <dbReference type="NCBI Taxonomy" id="431947"/>
    <lineage>
        <taxon>Bacteria</taxon>
        <taxon>Pseudomonadati</taxon>
        <taxon>Bacteroidota</taxon>
        <taxon>Bacteroidia</taxon>
        <taxon>Bacteroidales</taxon>
        <taxon>Porphyromonadaceae</taxon>
        <taxon>Porphyromonas</taxon>
    </lineage>
</organism>
<proteinExistence type="inferred from homology"/>
<accession>B2RHI3</accession>
<name>RNPA_PORG3</name>
<sequence>MTSPATFGLSKSERLYLRDEINTVFGEGKAFVVYPLRVVYRLGSEHRAAYSSMLVSVAKKRFRRAVKRNRVKRLVREAYRLNKHLLNDVLQERQIYATIAFMVVSDELPDFRTVERAMQKSLIRIAGNVPSSALKNE</sequence>
<feature type="chain" id="PRO_1000194654" description="Ribonuclease P protein component">
    <location>
        <begin position="1"/>
        <end position="137"/>
    </location>
</feature>